<reference key="1">
    <citation type="journal article" date="1998" name="Nature">
        <title>Deciphering the biology of Mycobacterium tuberculosis from the complete genome sequence.</title>
        <authorList>
            <person name="Cole S.T."/>
            <person name="Brosch R."/>
            <person name="Parkhill J."/>
            <person name="Garnier T."/>
            <person name="Churcher C.M."/>
            <person name="Harris D.E."/>
            <person name="Gordon S.V."/>
            <person name="Eiglmeier K."/>
            <person name="Gas S."/>
            <person name="Barry C.E. III"/>
            <person name="Tekaia F."/>
            <person name="Badcock K."/>
            <person name="Basham D."/>
            <person name="Brown D."/>
            <person name="Chillingworth T."/>
            <person name="Connor R."/>
            <person name="Davies R.M."/>
            <person name="Devlin K."/>
            <person name="Feltwell T."/>
            <person name="Gentles S."/>
            <person name="Hamlin N."/>
            <person name="Holroyd S."/>
            <person name="Hornsby T."/>
            <person name="Jagels K."/>
            <person name="Krogh A."/>
            <person name="McLean J."/>
            <person name="Moule S."/>
            <person name="Murphy L.D."/>
            <person name="Oliver S."/>
            <person name="Osborne J."/>
            <person name="Quail M.A."/>
            <person name="Rajandream M.A."/>
            <person name="Rogers J."/>
            <person name="Rutter S."/>
            <person name="Seeger K."/>
            <person name="Skelton S."/>
            <person name="Squares S."/>
            <person name="Squares R."/>
            <person name="Sulston J.E."/>
            <person name="Taylor K."/>
            <person name="Whitehead S."/>
            <person name="Barrell B.G."/>
        </authorList>
    </citation>
    <scope>NUCLEOTIDE SEQUENCE [LARGE SCALE GENOMIC DNA]</scope>
    <source>
        <strain>ATCC 25618 / H37Rv</strain>
    </source>
</reference>
<reference key="2">
    <citation type="journal article" date="2011" name="Mol. Cell. Proteomics">
        <title>Proteogenomic analysis of Mycobacterium tuberculosis by high resolution mass spectrometry.</title>
        <authorList>
            <person name="Kelkar D.S."/>
            <person name="Kumar D."/>
            <person name="Kumar P."/>
            <person name="Balakrishnan L."/>
            <person name="Muthusamy B."/>
            <person name="Yadav A.K."/>
            <person name="Shrivastava P."/>
            <person name="Marimuthu A."/>
            <person name="Anand S."/>
            <person name="Sundaram H."/>
            <person name="Kingsbury R."/>
            <person name="Harsha H.C."/>
            <person name="Nair B."/>
            <person name="Prasad T.S."/>
            <person name="Chauhan D.S."/>
            <person name="Katoch K."/>
            <person name="Katoch V.M."/>
            <person name="Kumar P."/>
            <person name="Chaerkady R."/>
            <person name="Ramachandran S."/>
            <person name="Dash D."/>
            <person name="Pandey A."/>
        </authorList>
    </citation>
    <scope>IDENTIFICATION BY MASS SPECTROMETRY [LARGE SCALE ANALYSIS]</scope>
    <source>
        <strain>ATCC 25618 / H37Rv</strain>
    </source>
</reference>
<reference key="3">
    <citation type="submission" date="2006-03" db="PDB data bank">
        <title>Crystal structure of a putative pduO-type ATP:cobalamin adenosyltransferase from Mycobacterium tuberculosis.</title>
        <authorList>
            <consortium name="Mycobacterium tuberculosis structural genomics consortium (TB)"/>
        </authorList>
    </citation>
    <scope>X-RAY CRYSTALLOGRAPHY (2.0 ANGSTROMS)</scope>
</reference>
<proteinExistence type="evidence at protein level"/>
<feature type="chain" id="PRO_0000103798" description="Corrinoid adenosyltransferase">
    <location>
        <begin position="1"/>
        <end position="193"/>
    </location>
</feature>
<feature type="binding site" evidence="1">
    <location>
        <begin position="10"/>
        <end position="18"/>
    </location>
    <ligand>
        <name>ATP</name>
        <dbReference type="ChEBI" id="CHEBI:30616"/>
    </ligand>
</feature>
<feature type="binding site" evidence="1">
    <location>
        <position position="28"/>
    </location>
    <ligand>
        <name>ATP</name>
        <dbReference type="ChEBI" id="CHEBI:30616"/>
    </ligand>
</feature>
<feature type="binding site" evidence="1">
    <location>
        <begin position="137"/>
        <end position="142"/>
    </location>
    <ligand>
        <name>ATP</name>
        <dbReference type="ChEBI" id="CHEBI:30616"/>
    </ligand>
</feature>
<feature type="binding site" evidence="1">
    <location>
        <position position="163"/>
    </location>
    <ligand>
        <name>ATP</name>
        <dbReference type="ChEBI" id="CHEBI:30616"/>
    </ligand>
</feature>
<feature type="strand" evidence="5">
    <location>
        <begin position="5"/>
        <end position="7"/>
    </location>
</feature>
<feature type="turn" evidence="6">
    <location>
        <begin position="12"/>
        <end position="15"/>
    </location>
</feature>
<feature type="strand" evidence="3">
    <location>
        <begin position="17"/>
        <end position="19"/>
    </location>
</feature>
<feature type="strand" evidence="3">
    <location>
        <begin position="25"/>
        <end position="27"/>
    </location>
</feature>
<feature type="helix" evidence="3">
    <location>
        <begin position="31"/>
        <end position="53"/>
    </location>
</feature>
<feature type="helix" evidence="3">
    <location>
        <begin position="57"/>
        <end position="77"/>
    </location>
</feature>
<feature type="helix" evidence="3">
    <location>
        <begin position="94"/>
        <end position="108"/>
    </location>
</feature>
<feature type="strand" evidence="5">
    <location>
        <begin position="114"/>
        <end position="116"/>
    </location>
</feature>
<feature type="strand" evidence="4">
    <location>
        <begin position="118"/>
        <end position="120"/>
    </location>
</feature>
<feature type="helix" evidence="3">
    <location>
        <begin position="124"/>
        <end position="149"/>
    </location>
</feature>
<feature type="turn" evidence="3">
    <location>
        <begin position="151"/>
        <end position="153"/>
    </location>
</feature>
<feature type="helix" evidence="3">
    <location>
        <begin position="157"/>
        <end position="176"/>
    </location>
</feature>
<evidence type="ECO:0000250" key="1"/>
<evidence type="ECO:0000305" key="2"/>
<evidence type="ECO:0007829" key="3">
    <source>
        <dbReference type="PDB" id="6WGS"/>
    </source>
</evidence>
<evidence type="ECO:0007829" key="4">
    <source>
        <dbReference type="PDB" id="6WGU"/>
    </source>
</evidence>
<evidence type="ECO:0007829" key="5">
    <source>
        <dbReference type="PDB" id="6WH5"/>
    </source>
</evidence>
<evidence type="ECO:0007829" key="6">
    <source>
        <dbReference type="PDB" id="8D32"/>
    </source>
</evidence>
<keyword id="KW-0002">3D-structure</keyword>
<keyword id="KW-0067">ATP-binding</keyword>
<keyword id="KW-0169">Cobalamin biosynthesis</keyword>
<keyword id="KW-0963">Cytoplasm</keyword>
<keyword id="KW-0547">Nucleotide-binding</keyword>
<keyword id="KW-0627">Porphyrin biosynthesis</keyword>
<keyword id="KW-1185">Reference proteome</keyword>
<keyword id="KW-0808">Transferase</keyword>
<gene>
    <name type="ordered locus">Rv1314c</name>
    <name type="ORF">MTCY373.34c</name>
</gene>
<dbReference type="EC" id="2.5.1.17"/>
<dbReference type="EMBL" id="AL123456">
    <property type="protein sequence ID" value="CCP44071.1"/>
    <property type="molecule type" value="Genomic_DNA"/>
</dbReference>
<dbReference type="PIR" id="F70775">
    <property type="entry name" value="F70775"/>
</dbReference>
<dbReference type="RefSeq" id="NP_215830.1">
    <property type="nucleotide sequence ID" value="NC_000962.3"/>
</dbReference>
<dbReference type="RefSeq" id="WP_003406839.1">
    <property type="nucleotide sequence ID" value="NZ_NVQJ01000059.1"/>
</dbReference>
<dbReference type="PDB" id="2G2D">
    <property type="method" value="X-ray"/>
    <property type="resolution" value="2.00 A"/>
    <property type="chains" value="A=1-193"/>
</dbReference>
<dbReference type="PDB" id="6WGS">
    <property type="method" value="X-ray"/>
    <property type="resolution" value="1.50 A"/>
    <property type="chains" value="A=1-193"/>
</dbReference>
<dbReference type="PDB" id="6WGU">
    <property type="method" value="X-ray"/>
    <property type="resolution" value="1.65 A"/>
    <property type="chains" value="A=1-193"/>
</dbReference>
<dbReference type="PDB" id="6WGV">
    <property type="method" value="X-ray"/>
    <property type="resolution" value="2.15 A"/>
    <property type="chains" value="A=1-193"/>
</dbReference>
<dbReference type="PDB" id="6WH5">
    <property type="method" value="X-ray"/>
    <property type="resolution" value="1.87 A"/>
    <property type="chains" value="A/B/C=1-193"/>
</dbReference>
<dbReference type="PDB" id="8D32">
    <property type="method" value="X-ray"/>
    <property type="resolution" value="1.85 A"/>
    <property type="chains" value="A=1-193"/>
</dbReference>
<dbReference type="PDBsum" id="2G2D"/>
<dbReference type="PDBsum" id="6WGS"/>
<dbReference type="PDBsum" id="6WGU"/>
<dbReference type="PDBsum" id="6WGV"/>
<dbReference type="PDBsum" id="6WH5"/>
<dbReference type="PDBsum" id="8D32"/>
<dbReference type="SMR" id="P9WP99"/>
<dbReference type="FunCoup" id="P9WP99">
    <property type="interactions" value="291"/>
</dbReference>
<dbReference type="STRING" id="83332.Rv1314c"/>
<dbReference type="PaxDb" id="83332-Rv1314c"/>
<dbReference type="DNASU" id="886925"/>
<dbReference type="GeneID" id="886925"/>
<dbReference type="KEGG" id="mtu:Rv1314c"/>
<dbReference type="KEGG" id="mtv:RVBD_1314c"/>
<dbReference type="TubercuList" id="Rv1314c"/>
<dbReference type="eggNOG" id="COG2096">
    <property type="taxonomic scope" value="Bacteria"/>
</dbReference>
<dbReference type="InParanoid" id="P9WP99"/>
<dbReference type="OrthoDB" id="9778896at2"/>
<dbReference type="PhylomeDB" id="P9WP99"/>
<dbReference type="UniPathway" id="UPA00148">
    <property type="reaction ID" value="UER00233"/>
</dbReference>
<dbReference type="EvolutionaryTrace" id="P9WP99"/>
<dbReference type="Proteomes" id="UP000001584">
    <property type="component" value="Chromosome"/>
</dbReference>
<dbReference type="GO" id="GO:0005737">
    <property type="term" value="C:cytoplasm"/>
    <property type="evidence" value="ECO:0007669"/>
    <property type="project" value="UniProtKB-SubCell"/>
</dbReference>
<dbReference type="GO" id="GO:0005524">
    <property type="term" value="F:ATP binding"/>
    <property type="evidence" value="ECO:0007669"/>
    <property type="project" value="UniProtKB-KW"/>
</dbReference>
<dbReference type="GO" id="GO:0008817">
    <property type="term" value="F:corrinoid adenosyltransferase activity"/>
    <property type="evidence" value="ECO:0000318"/>
    <property type="project" value="GO_Central"/>
</dbReference>
<dbReference type="GO" id="GO:0009236">
    <property type="term" value="P:cobalamin biosynthetic process"/>
    <property type="evidence" value="ECO:0007669"/>
    <property type="project" value="UniProtKB-UniPathway"/>
</dbReference>
<dbReference type="GO" id="GO:0006779">
    <property type="term" value="P:porphyrin-containing compound biosynthetic process"/>
    <property type="evidence" value="ECO:0007669"/>
    <property type="project" value="UniProtKB-KW"/>
</dbReference>
<dbReference type="FunFam" id="1.20.1200.10:FF:000003">
    <property type="entry name" value="ATP:cob(I)alamin adenosyltransferase"/>
    <property type="match status" value="1"/>
</dbReference>
<dbReference type="Gene3D" id="1.20.1200.10">
    <property type="entry name" value="Cobalamin adenosyltransferase-like"/>
    <property type="match status" value="1"/>
</dbReference>
<dbReference type="InterPro" id="IPR016030">
    <property type="entry name" value="CblAdoTrfase-like"/>
</dbReference>
<dbReference type="InterPro" id="IPR036451">
    <property type="entry name" value="CblAdoTrfase-like_sf"/>
</dbReference>
<dbReference type="InterPro" id="IPR029499">
    <property type="entry name" value="PduO-typ"/>
</dbReference>
<dbReference type="NCBIfam" id="TIGR00636">
    <property type="entry name" value="PduO_Nterm"/>
    <property type="match status" value="1"/>
</dbReference>
<dbReference type="PANTHER" id="PTHR12213">
    <property type="entry name" value="CORRINOID ADENOSYLTRANSFERASE"/>
    <property type="match status" value="1"/>
</dbReference>
<dbReference type="PANTHER" id="PTHR12213:SF0">
    <property type="entry name" value="CORRINOID ADENOSYLTRANSFERASE MMAB"/>
    <property type="match status" value="1"/>
</dbReference>
<dbReference type="Pfam" id="PF01923">
    <property type="entry name" value="Cob_adeno_trans"/>
    <property type="match status" value="1"/>
</dbReference>
<dbReference type="SUPFAM" id="SSF89028">
    <property type="entry name" value="Cobalamin adenosyltransferase-like"/>
    <property type="match status" value="1"/>
</dbReference>
<sequence>MAVHLTRIYTRTGDDGTTGLSDMSRVAKTDARLVAYADCDEANAAIGAALALGHPDTQITDVLRQIQNDLFDAGADLSTPIVENPKHPPLRIAQSYIDRLEGWCDAYNAGLPALKSFVLPGGSPLSALLHVARTVVRRAERSAWAAVDAHPEGVSVLPAKYLNRLSDLLFILSRVANPDGDVLWRPGGDRTAS</sequence>
<protein>
    <recommendedName>
        <fullName>Corrinoid adenosyltransferase</fullName>
        <ecNumber>2.5.1.17</ecNumber>
    </recommendedName>
    <alternativeName>
        <fullName>Cob(II)alamin adenosyltransferase</fullName>
    </alternativeName>
    <alternativeName>
        <fullName>Cob(II)yrinic acid a,c-diamide adenosyltransferase</fullName>
    </alternativeName>
    <alternativeName>
        <fullName>Cobinamide/cobalamin adenosyltransferase</fullName>
    </alternativeName>
</protein>
<accession>P9WP99</accession>
<accession>L0T6A0</accession>
<accession>P64803</accession>
<accession>Q10622</accession>
<name>PDUO_MYCTU</name>
<organism>
    <name type="scientific">Mycobacterium tuberculosis (strain ATCC 25618 / H37Rv)</name>
    <dbReference type="NCBI Taxonomy" id="83332"/>
    <lineage>
        <taxon>Bacteria</taxon>
        <taxon>Bacillati</taxon>
        <taxon>Actinomycetota</taxon>
        <taxon>Actinomycetes</taxon>
        <taxon>Mycobacteriales</taxon>
        <taxon>Mycobacteriaceae</taxon>
        <taxon>Mycobacterium</taxon>
        <taxon>Mycobacterium tuberculosis complex</taxon>
    </lineage>
</organism>
<comment type="catalytic activity">
    <reaction>
        <text>2 cob(II)yrinate a,c diamide + reduced [electron-transfer flavoprotein] + 2 ATP = 2 adenosylcob(III)yrinate a,c-diamide + 2 triphosphate + oxidized [electron-transfer flavoprotein] + 3 H(+)</text>
        <dbReference type="Rhea" id="RHEA:11528"/>
        <dbReference type="Rhea" id="RHEA-COMP:10685"/>
        <dbReference type="Rhea" id="RHEA-COMP:10686"/>
        <dbReference type="ChEBI" id="CHEBI:15378"/>
        <dbReference type="ChEBI" id="CHEBI:18036"/>
        <dbReference type="ChEBI" id="CHEBI:30616"/>
        <dbReference type="ChEBI" id="CHEBI:57692"/>
        <dbReference type="ChEBI" id="CHEBI:58307"/>
        <dbReference type="ChEBI" id="CHEBI:58503"/>
        <dbReference type="ChEBI" id="CHEBI:58537"/>
        <dbReference type="EC" id="2.5.1.17"/>
    </reaction>
</comment>
<comment type="catalytic activity">
    <reaction>
        <text>2 cob(II)alamin + reduced [electron-transfer flavoprotein] + 2 ATP = 2 adenosylcob(III)alamin + 2 triphosphate + oxidized [electron-transfer flavoprotein] + 3 H(+)</text>
        <dbReference type="Rhea" id="RHEA:28671"/>
        <dbReference type="Rhea" id="RHEA-COMP:10685"/>
        <dbReference type="Rhea" id="RHEA-COMP:10686"/>
        <dbReference type="ChEBI" id="CHEBI:15378"/>
        <dbReference type="ChEBI" id="CHEBI:16304"/>
        <dbReference type="ChEBI" id="CHEBI:18036"/>
        <dbReference type="ChEBI" id="CHEBI:18408"/>
        <dbReference type="ChEBI" id="CHEBI:30616"/>
        <dbReference type="ChEBI" id="CHEBI:57692"/>
        <dbReference type="ChEBI" id="CHEBI:58307"/>
        <dbReference type="EC" id="2.5.1.17"/>
    </reaction>
</comment>
<comment type="pathway">
    <text>Cofactor biosynthesis; adenosylcobalamin biosynthesis; adenosylcobalamin from cob(II)yrinate a,c-diamide: step 2/7.</text>
</comment>
<comment type="subcellular location">
    <subcellularLocation>
        <location evidence="2">Cytoplasm</location>
    </subcellularLocation>
</comment>
<comment type="similarity">
    <text evidence="2">Belongs to the Cob(I)alamin adenosyltransferase family.</text>
</comment>